<dbReference type="EC" id="3.6.5.-" evidence="2"/>
<dbReference type="EMBL" id="Z11769">
    <property type="protein sequence ID" value="CAA77816.1"/>
    <property type="molecule type" value="Genomic_DNA"/>
</dbReference>
<dbReference type="PIR" id="S24829">
    <property type="entry name" value="S24829"/>
</dbReference>
<dbReference type="SMR" id="P28268"/>
<dbReference type="GO" id="GO:0005737">
    <property type="term" value="C:cytoplasm"/>
    <property type="evidence" value="ECO:0007669"/>
    <property type="project" value="UniProtKB-KW"/>
</dbReference>
<dbReference type="GO" id="GO:0005874">
    <property type="term" value="C:microtubule"/>
    <property type="evidence" value="ECO:0007669"/>
    <property type="project" value="UniProtKB-KW"/>
</dbReference>
<dbReference type="GO" id="GO:0005525">
    <property type="term" value="F:GTP binding"/>
    <property type="evidence" value="ECO:0007669"/>
    <property type="project" value="UniProtKB-KW"/>
</dbReference>
<dbReference type="GO" id="GO:0016787">
    <property type="term" value="F:hydrolase activity"/>
    <property type="evidence" value="ECO:0007669"/>
    <property type="project" value="UniProtKB-KW"/>
</dbReference>
<dbReference type="GO" id="GO:0046872">
    <property type="term" value="F:metal ion binding"/>
    <property type="evidence" value="ECO:0007669"/>
    <property type="project" value="UniProtKB-KW"/>
</dbReference>
<dbReference type="GO" id="GO:0005200">
    <property type="term" value="F:structural constituent of cytoskeleton"/>
    <property type="evidence" value="ECO:0007669"/>
    <property type="project" value="InterPro"/>
</dbReference>
<dbReference type="GO" id="GO:0007017">
    <property type="term" value="P:microtubule-based process"/>
    <property type="evidence" value="ECO:0007669"/>
    <property type="project" value="InterPro"/>
</dbReference>
<dbReference type="CDD" id="cd02186">
    <property type="entry name" value="alpha_tubulin"/>
    <property type="match status" value="1"/>
</dbReference>
<dbReference type="FunFam" id="1.10.287.600:FF:000005">
    <property type="entry name" value="Tubulin alpha chain"/>
    <property type="match status" value="1"/>
</dbReference>
<dbReference type="FunFam" id="3.30.1330.20:FF:000001">
    <property type="entry name" value="Tubulin alpha chain"/>
    <property type="match status" value="1"/>
</dbReference>
<dbReference type="FunFam" id="3.40.50.1440:FF:000004">
    <property type="entry name" value="Tubulin alpha chain"/>
    <property type="match status" value="1"/>
</dbReference>
<dbReference type="Gene3D" id="1.10.287.600">
    <property type="entry name" value="Helix hairpin bin"/>
    <property type="match status" value="1"/>
</dbReference>
<dbReference type="Gene3D" id="3.30.1330.20">
    <property type="entry name" value="Tubulin/FtsZ, C-terminal domain"/>
    <property type="match status" value="1"/>
</dbReference>
<dbReference type="Gene3D" id="3.40.50.1440">
    <property type="entry name" value="Tubulin/FtsZ, GTPase domain"/>
    <property type="match status" value="1"/>
</dbReference>
<dbReference type="InterPro" id="IPR002452">
    <property type="entry name" value="Alpha_tubulin"/>
</dbReference>
<dbReference type="InterPro" id="IPR008280">
    <property type="entry name" value="Tub_FtsZ_C"/>
</dbReference>
<dbReference type="InterPro" id="IPR000217">
    <property type="entry name" value="Tubulin"/>
</dbReference>
<dbReference type="InterPro" id="IPR037103">
    <property type="entry name" value="Tubulin/FtsZ-like_C"/>
</dbReference>
<dbReference type="InterPro" id="IPR018316">
    <property type="entry name" value="Tubulin/FtsZ_2-layer-sand-dom"/>
</dbReference>
<dbReference type="InterPro" id="IPR036525">
    <property type="entry name" value="Tubulin/FtsZ_GTPase_sf"/>
</dbReference>
<dbReference type="InterPro" id="IPR023123">
    <property type="entry name" value="Tubulin_C"/>
</dbReference>
<dbReference type="InterPro" id="IPR017975">
    <property type="entry name" value="Tubulin_CS"/>
</dbReference>
<dbReference type="InterPro" id="IPR003008">
    <property type="entry name" value="Tubulin_FtsZ_GTPase"/>
</dbReference>
<dbReference type="PANTHER" id="PTHR11588">
    <property type="entry name" value="TUBULIN"/>
    <property type="match status" value="1"/>
</dbReference>
<dbReference type="Pfam" id="PF00091">
    <property type="entry name" value="Tubulin"/>
    <property type="match status" value="1"/>
</dbReference>
<dbReference type="Pfam" id="PF03953">
    <property type="entry name" value="Tubulin_C"/>
    <property type="match status" value="1"/>
</dbReference>
<dbReference type="PRINTS" id="PR01162">
    <property type="entry name" value="ALPHATUBULIN"/>
</dbReference>
<dbReference type="PRINTS" id="PR01161">
    <property type="entry name" value="TUBULIN"/>
</dbReference>
<dbReference type="SMART" id="SM00864">
    <property type="entry name" value="Tubulin"/>
    <property type="match status" value="1"/>
</dbReference>
<dbReference type="SMART" id="SM00865">
    <property type="entry name" value="Tubulin_C"/>
    <property type="match status" value="1"/>
</dbReference>
<dbReference type="SUPFAM" id="SSF55307">
    <property type="entry name" value="Tubulin C-terminal domain-like"/>
    <property type="match status" value="1"/>
</dbReference>
<dbReference type="SUPFAM" id="SSF52490">
    <property type="entry name" value="Tubulin nucleotide-binding domain-like"/>
    <property type="match status" value="1"/>
</dbReference>
<dbReference type="PROSITE" id="PS00227">
    <property type="entry name" value="TUBULIN"/>
    <property type="match status" value="1"/>
</dbReference>
<protein>
    <recommendedName>
        <fullName>Tubulin alpha chain</fullName>
        <ecNumber evidence="2">3.6.5.-</ecNumber>
    </recommendedName>
</protein>
<reference key="1">
    <citation type="thesis" date="1990" institute="University of Tuebingen" country="Germany">
        <authorList>
            <person name="Gaunitz F."/>
        </authorList>
    </citation>
    <scope>NUCLEOTIDE SEQUENCE [GENOMIC DNA]</scope>
    <source>
        <strain>SB 2</strain>
    </source>
</reference>
<feature type="chain" id="PRO_0000048172" description="Tubulin alpha chain">
    <location>
        <begin position="1"/>
        <end position="450"/>
    </location>
</feature>
<feature type="active site" evidence="2">
    <location>
        <position position="254"/>
    </location>
</feature>
<feature type="binding site" evidence="2">
    <location>
        <position position="11"/>
    </location>
    <ligand>
        <name>GTP</name>
        <dbReference type="ChEBI" id="CHEBI:37565"/>
    </ligand>
</feature>
<feature type="binding site" evidence="2">
    <location>
        <position position="71"/>
    </location>
    <ligand>
        <name>GTP</name>
        <dbReference type="ChEBI" id="CHEBI:37565"/>
    </ligand>
</feature>
<feature type="binding site" evidence="2">
    <location>
        <position position="71"/>
    </location>
    <ligand>
        <name>Mg(2+)</name>
        <dbReference type="ChEBI" id="CHEBI:18420"/>
    </ligand>
</feature>
<feature type="binding site" evidence="2">
    <location>
        <position position="140"/>
    </location>
    <ligand>
        <name>GTP</name>
        <dbReference type="ChEBI" id="CHEBI:37565"/>
    </ligand>
</feature>
<feature type="binding site" evidence="2">
    <location>
        <position position="144"/>
    </location>
    <ligand>
        <name>GTP</name>
        <dbReference type="ChEBI" id="CHEBI:37565"/>
    </ligand>
</feature>
<feature type="binding site" evidence="2">
    <location>
        <position position="145"/>
    </location>
    <ligand>
        <name>GTP</name>
        <dbReference type="ChEBI" id="CHEBI:37565"/>
    </ligand>
</feature>
<feature type="binding site" evidence="2">
    <location>
        <position position="179"/>
    </location>
    <ligand>
        <name>GTP</name>
        <dbReference type="ChEBI" id="CHEBI:37565"/>
    </ligand>
</feature>
<feature type="binding site" evidence="2">
    <location>
        <position position="206"/>
    </location>
    <ligand>
        <name>GTP</name>
        <dbReference type="ChEBI" id="CHEBI:37565"/>
    </ligand>
</feature>
<feature type="binding site" evidence="2">
    <location>
        <position position="228"/>
    </location>
    <ligand>
        <name>GTP</name>
        <dbReference type="ChEBI" id="CHEBI:37565"/>
    </ligand>
</feature>
<feature type="modified residue" description="N6-acetyllysine" evidence="1">
    <location>
        <position position="40"/>
    </location>
</feature>
<keyword id="KW-0007">Acetylation</keyword>
<keyword id="KW-0963">Cytoplasm</keyword>
<keyword id="KW-0206">Cytoskeleton</keyword>
<keyword id="KW-0342">GTP-binding</keyword>
<keyword id="KW-0378">Hydrolase</keyword>
<keyword id="KW-0460">Magnesium</keyword>
<keyword id="KW-0479">Metal-binding</keyword>
<keyword id="KW-0493">Microtubule</keyword>
<keyword id="KW-0547">Nucleotide-binding</keyword>
<sequence length="450" mass="49563">MREVISVHIGQGGIQVGNACWELFCLEHGIQPDGQMPSDKTIGGGDDAFNTFFSETGAGKHVPRAVLVDLEPTVCDEIRTGTYRQLFHPEQIISGKEDAANNFARGHYTIGKEIVDLVLDRIRKLADNCTGLQGFIGFHSVGGGTGSGLGSLLLERLSVDYGKKSKLCFTVYPSPQVSTAVVEPYNSVLSTHSLLEHTDVAVMLDNEAVYDICRRNLDIERPTYTNLNRLIAQVISSLTASLRFDGALNVDITEFQTNLVPYPRIHFMLSSYGPVISAEKAYHEQLSVAEITNSSFEPASMMAKCDPRHGKYMACCMMFRGDVVPKDVNAAVATIKTKRTIQFVDWSPGFKVGINYQPPTVVPGGDLAKVMRAVCMISNSTAIAEVFSRIDHKFDLMYAKRAFVHWYVGEGMEEGEFSEAREDLAALEKDYEEVGIETAEGEGEEEDMAQ</sequence>
<organism>
    <name type="scientific">Euplotes vannus</name>
    <name type="common">Marine ciliate</name>
    <name type="synonym">Moneuplotes vannus</name>
    <dbReference type="NCBI Taxonomy" id="5939"/>
    <lineage>
        <taxon>Eukaryota</taxon>
        <taxon>Sar</taxon>
        <taxon>Alveolata</taxon>
        <taxon>Ciliophora</taxon>
        <taxon>Intramacronucleata</taxon>
        <taxon>Spirotrichea</taxon>
        <taxon>Hypotrichia</taxon>
        <taxon>Euplotida</taxon>
        <taxon>Euplotidae</taxon>
        <taxon>Euplotes</taxon>
    </lineage>
</organism>
<comment type="function">
    <text>Tubulin is the major constituent of microtubules, a cylinder consisting of laterally associated linear protofilaments composed of alpha- and beta-tubulin heterodimers. Microtubules grow by the addition of GTP-tubulin dimers to the microtubule end, where a stabilizing cap forms. Below the cap, tubulin dimers are in GDP-bound state, owing to GTPase activity of alpha-tubulin.</text>
</comment>
<comment type="catalytic activity">
    <reaction evidence="2">
        <text>GTP + H2O = GDP + phosphate + H(+)</text>
        <dbReference type="Rhea" id="RHEA:19669"/>
        <dbReference type="ChEBI" id="CHEBI:15377"/>
        <dbReference type="ChEBI" id="CHEBI:15378"/>
        <dbReference type="ChEBI" id="CHEBI:37565"/>
        <dbReference type="ChEBI" id="CHEBI:43474"/>
        <dbReference type="ChEBI" id="CHEBI:58189"/>
    </reaction>
    <physiologicalReaction direction="left-to-right" evidence="2">
        <dbReference type="Rhea" id="RHEA:19670"/>
    </physiologicalReaction>
</comment>
<comment type="cofactor">
    <cofactor evidence="2">
        <name>Mg(2+)</name>
        <dbReference type="ChEBI" id="CHEBI:18420"/>
    </cofactor>
</comment>
<comment type="subunit">
    <text>Dimer of alpha and beta chains. A typical microtubule is a hollow water-filled tube with an outer diameter of 25 nm and an inner diameter of 15 nM. Alpha-beta heterodimers associate head-to-tail to form protofilaments running lengthwise along the microtubule wall with the beta-tubulin subunit facing the microtubule plus end conferring a structural polarity. Microtubules usually have 13 protofilaments but different protofilament numbers can be found in some organisms and specialized cells.</text>
</comment>
<comment type="subcellular location">
    <subcellularLocation>
        <location>Cytoplasm</location>
        <location>Cytoskeleton</location>
    </subcellularLocation>
</comment>
<comment type="PTM">
    <text evidence="1">Acetylation of alpha chains at Lys-40 stabilizes microtubules and affects affinity and processivity of microtubule motors. This modification has a role in multiple cellular functions, ranging from cell motility, cell cycle progression or cell differentiation to intracellular trafficking and signaling (By similarity).</text>
</comment>
<comment type="similarity">
    <text evidence="3">Belongs to the tubulin family.</text>
</comment>
<accession>P28268</accession>
<evidence type="ECO:0000250" key="1"/>
<evidence type="ECO:0000250" key="2">
    <source>
        <dbReference type="UniProtKB" id="P68363"/>
    </source>
</evidence>
<evidence type="ECO:0000305" key="3"/>
<proteinExistence type="inferred from homology"/>
<name>TBA_EUPVA</name>